<feature type="chain" id="PRO_1000048507" description="DNA replication and repair protein RecF">
    <location>
        <begin position="1"/>
        <end position="361"/>
    </location>
</feature>
<feature type="binding site" evidence="1">
    <location>
        <begin position="30"/>
        <end position="37"/>
    </location>
    <ligand>
        <name>ATP</name>
        <dbReference type="ChEBI" id="CHEBI:30616"/>
    </ligand>
</feature>
<gene>
    <name evidence="1" type="primary">recF</name>
    <name type="ordered locus">Csal_0003</name>
</gene>
<accession>Q1R1P0</accession>
<evidence type="ECO:0000255" key="1">
    <source>
        <dbReference type="HAMAP-Rule" id="MF_00365"/>
    </source>
</evidence>
<proteinExistence type="inferred from homology"/>
<comment type="function">
    <text evidence="1">The RecF protein is involved in DNA metabolism; it is required for DNA replication and normal SOS inducibility. RecF binds preferentially to single-stranded, linear DNA. It also seems to bind ATP.</text>
</comment>
<comment type="subcellular location">
    <subcellularLocation>
        <location evidence="1">Cytoplasm</location>
    </subcellularLocation>
</comment>
<comment type="similarity">
    <text evidence="1">Belongs to the RecF family.</text>
</comment>
<organism>
    <name type="scientific">Chromohalobacter salexigens (strain ATCC BAA-138 / DSM 3043 / CIP 106854 / NCIMB 13768 / 1H11)</name>
    <dbReference type="NCBI Taxonomy" id="290398"/>
    <lineage>
        <taxon>Bacteria</taxon>
        <taxon>Pseudomonadati</taxon>
        <taxon>Pseudomonadota</taxon>
        <taxon>Gammaproteobacteria</taxon>
        <taxon>Oceanospirillales</taxon>
        <taxon>Halomonadaceae</taxon>
        <taxon>Chromohalobacter</taxon>
    </lineage>
</organism>
<dbReference type="EMBL" id="CP000285">
    <property type="protein sequence ID" value="ABE57368.1"/>
    <property type="molecule type" value="Genomic_DNA"/>
</dbReference>
<dbReference type="RefSeq" id="WP_011505314.1">
    <property type="nucleotide sequence ID" value="NC_007963.1"/>
</dbReference>
<dbReference type="SMR" id="Q1R1P0"/>
<dbReference type="STRING" id="290398.Csal_0003"/>
<dbReference type="DNASU" id="4027322"/>
<dbReference type="GeneID" id="95332756"/>
<dbReference type="KEGG" id="csa:Csal_0003"/>
<dbReference type="eggNOG" id="COG1195">
    <property type="taxonomic scope" value="Bacteria"/>
</dbReference>
<dbReference type="HOGENOM" id="CLU_040267_0_0_6"/>
<dbReference type="OrthoDB" id="9803889at2"/>
<dbReference type="Proteomes" id="UP000000239">
    <property type="component" value="Chromosome"/>
</dbReference>
<dbReference type="GO" id="GO:0005737">
    <property type="term" value="C:cytoplasm"/>
    <property type="evidence" value="ECO:0007669"/>
    <property type="project" value="UniProtKB-SubCell"/>
</dbReference>
<dbReference type="GO" id="GO:0005524">
    <property type="term" value="F:ATP binding"/>
    <property type="evidence" value="ECO:0007669"/>
    <property type="project" value="UniProtKB-UniRule"/>
</dbReference>
<dbReference type="GO" id="GO:0003697">
    <property type="term" value="F:single-stranded DNA binding"/>
    <property type="evidence" value="ECO:0007669"/>
    <property type="project" value="UniProtKB-UniRule"/>
</dbReference>
<dbReference type="GO" id="GO:0006260">
    <property type="term" value="P:DNA replication"/>
    <property type="evidence" value="ECO:0007669"/>
    <property type="project" value="UniProtKB-UniRule"/>
</dbReference>
<dbReference type="GO" id="GO:0000731">
    <property type="term" value="P:DNA synthesis involved in DNA repair"/>
    <property type="evidence" value="ECO:0007669"/>
    <property type="project" value="TreeGrafter"/>
</dbReference>
<dbReference type="GO" id="GO:0006302">
    <property type="term" value="P:double-strand break repair"/>
    <property type="evidence" value="ECO:0007669"/>
    <property type="project" value="TreeGrafter"/>
</dbReference>
<dbReference type="GO" id="GO:0009432">
    <property type="term" value="P:SOS response"/>
    <property type="evidence" value="ECO:0007669"/>
    <property type="project" value="UniProtKB-UniRule"/>
</dbReference>
<dbReference type="Gene3D" id="3.40.50.300">
    <property type="entry name" value="P-loop containing nucleotide triphosphate hydrolases"/>
    <property type="match status" value="1"/>
</dbReference>
<dbReference type="Gene3D" id="1.20.1050.90">
    <property type="entry name" value="RecF/RecN/SMC, N-terminal domain"/>
    <property type="match status" value="1"/>
</dbReference>
<dbReference type="HAMAP" id="MF_00365">
    <property type="entry name" value="RecF"/>
    <property type="match status" value="1"/>
</dbReference>
<dbReference type="InterPro" id="IPR001238">
    <property type="entry name" value="DNA-binding_RecF"/>
</dbReference>
<dbReference type="InterPro" id="IPR018078">
    <property type="entry name" value="DNA-binding_RecF_CS"/>
</dbReference>
<dbReference type="InterPro" id="IPR027417">
    <property type="entry name" value="P-loop_NTPase"/>
</dbReference>
<dbReference type="InterPro" id="IPR003395">
    <property type="entry name" value="RecF/RecN/SMC_N"/>
</dbReference>
<dbReference type="InterPro" id="IPR042174">
    <property type="entry name" value="RecF_2"/>
</dbReference>
<dbReference type="NCBIfam" id="TIGR00611">
    <property type="entry name" value="recf"/>
    <property type="match status" value="1"/>
</dbReference>
<dbReference type="PANTHER" id="PTHR32182">
    <property type="entry name" value="DNA REPLICATION AND REPAIR PROTEIN RECF"/>
    <property type="match status" value="1"/>
</dbReference>
<dbReference type="PANTHER" id="PTHR32182:SF0">
    <property type="entry name" value="DNA REPLICATION AND REPAIR PROTEIN RECF"/>
    <property type="match status" value="1"/>
</dbReference>
<dbReference type="Pfam" id="PF02463">
    <property type="entry name" value="SMC_N"/>
    <property type="match status" value="1"/>
</dbReference>
<dbReference type="SUPFAM" id="SSF52540">
    <property type="entry name" value="P-loop containing nucleoside triphosphate hydrolases"/>
    <property type="match status" value="1"/>
</dbReference>
<dbReference type="PROSITE" id="PS00617">
    <property type="entry name" value="RECF_1"/>
    <property type="match status" value="1"/>
</dbReference>
<dbReference type="PROSITE" id="PS00618">
    <property type="entry name" value="RECF_2"/>
    <property type="match status" value="1"/>
</dbReference>
<protein>
    <recommendedName>
        <fullName evidence="1">DNA replication and repair protein RecF</fullName>
    </recommendedName>
</protein>
<keyword id="KW-0067">ATP-binding</keyword>
<keyword id="KW-0963">Cytoplasm</keyword>
<keyword id="KW-0227">DNA damage</keyword>
<keyword id="KW-0234">DNA repair</keyword>
<keyword id="KW-0235">DNA replication</keyword>
<keyword id="KW-0238">DNA-binding</keyword>
<keyword id="KW-0547">Nucleotide-binding</keyword>
<keyword id="KW-1185">Reference proteome</keyword>
<keyword id="KW-0742">SOS response</keyword>
<reference key="1">
    <citation type="journal article" date="2011" name="Stand. Genomic Sci.">
        <title>Complete genome sequence of the halophilic and highly halotolerant Chromohalobacter salexigens type strain (1H11(T)).</title>
        <authorList>
            <person name="Copeland A."/>
            <person name="O'Connor K."/>
            <person name="Lucas S."/>
            <person name="Lapidus A."/>
            <person name="Berry K.W."/>
            <person name="Detter J.C."/>
            <person name="Del Rio T.G."/>
            <person name="Hammon N."/>
            <person name="Dalin E."/>
            <person name="Tice H."/>
            <person name="Pitluck S."/>
            <person name="Bruce D."/>
            <person name="Goodwin L."/>
            <person name="Han C."/>
            <person name="Tapia R."/>
            <person name="Saunders E."/>
            <person name="Schmutz J."/>
            <person name="Brettin T."/>
            <person name="Larimer F."/>
            <person name="Land M."/>
            <person name="Hauser L."/>
            <person name="Vargas C."/>
            <person name="Nieto J.J."/>
            <person name="Kyrpides N.C."/>
            <person name="Ivanova N."/>
            <person name="Goker M."/>
            <person name="Klenk H.P."/>
            <person name="Csonka L.N."/>
            <person name="Woyke T."/>
        </authorList>
    </citation>
    <scope>NUCLEOTIDE SEQUENCE [LARGE SCALE GENOMIC DNA]</scope>
    <source>
        <strain>ATCC BAA-138 / DSM 3043 / CIP 106854 / NCIMB 13768 / 1H11</strain>
    </source>
</reference>
<name>RECF_CHRSD</name>
<sequence length="361" mass="41154">MPLERLNFLGLRNLAALDMRPGPGINLITGANGSGKTSLLEGMHVLGMARSFRTQKLKHAIAHDADAVTLHGRVAGDPPVALGVRRARDASELEIRLDGERGVRVARLAEALPLQLINPDAFRLLEGSPAARREFLDWGVFHVKHEFFEAWRRVRRALKHRNALLRHDRIDARSMRVWEQELAHWSELLDALRSEYMAQFAKAFEDTLHELLPLSGLSLRYYRGWDKQRGLLEVLEGGRDTDRQMGFTQQGPQRADLRLRIGKRAAVEELSRGQQKLVVSALKLAQGRLLDELTGRTCVYLIDDLPAELDVTHRRIFCHWLERLRCQVFITSVEREALANAWQSETDVAMFHVEHGRLLTE</sequence>